<protein>
    <recommendedName>
        <fullName evidence="5 10">Immunoglobulin heavy variable 2-70D</fullName>
    </recommendedName>
</protein>
<feature type="signal peptide" evidence="3">
    <location>
        <begin position="1"/>
        <end position="19"/>
    </location>
</feature>
<feature type="chain" id="PRO_5010413864" description="Immunoglobulin heavy variable 2-70D" evidence="3">
    <location>
        <begin position="20"/>
        <end position="119"/>
    </location>
</feature>
<feature type="domain" description="Ig-like" evidence="4">
    <location>
        <begin position="20"/>
        <end position="119" status="greater than"/>
    </location>
</feature>
<feature type="region of interest" description="Framework-1" evidence="2">
    <location>
        <begin position="20"/>
        <end position="44"/>
    </location>
</feature>
<feature type="region of interest" description="Complementarity-determining-1" evidence="2">
    <location>
        <begin position="45"/>
        <end position="54"/>
    </location>
</feature>
<feature type="region of interest" description="Framework-2" evidence="2">
    <location>
        <begin position="55"/>
        <end position="71"/>
    </location>
</feature>
<feature type="region of interest" description="Complementarity-determining-2" evidence="2">
    <location>
        <begin position="72"/>
        <end position="78"/>
    </location>
</feature>
<feature type="region of interest" description="Framework-3" evidence="2">
    <location>
        <begin position="79"/>
        <end position="116"/>
    </location>
</feature>
<feature type="region of interest" description="Complementarity-determining-3" evidence="2">
    <location>
        <begin position="117"/>
        <end position="119" status="greater than"/>
    </location>
</feature>
<feature type="modified residue" description="Pyrrolidone carboxylic acid" evidence="1">
    <location>
        <position position="20"/>
    </location>
</feature>
<feature type="disulfide bond" evidence="4">
    <location>
        <begin position="41"/>
        <end position="116"/>
    </location>
</feature>
<feature type="non-terminal residue">
    <location>
        <position position="119"/>
    </location>
</feature>
<organism>
    <name type="scientific">Homo sapiens</name>
    <name type="common">Human</name>
    <dbReference type="NCBI Taxonomy" id="9606"/>
    <lineage>
        <taxon>Eukaryota</taxon>
        <taxon>Metazoa</taxon>
        <taxon>Chordata</taxon>
        <taxon>Craniata</taxon>
        <taxon>Vertebrata</taxon>
        <taxon>Euteleostomi</taxon>
        <taxon>Mammalia</taxon>
        <taxon>Eutheria</taxon>
        <taxon>Euarchontoglires</taxon>
        <taxon>Primates</taxon>
        <taxon>Haplorrhini</taxon>
        <taxon>Catarrhini</taxon>
        <taxon>Hominidae</taxon>
        <taxon>Homo</taxon>
    </lineage>
</organism>
<sequence>MDILCSTLLLLTVPSWVLSQVTLKESGPALVKPTQTLTLTCTFSGFSLSTSGMRVSWIRQPPGKALEWLARIDWDDDKFYSTSLKTRLTISKDTSKNQVVLTMTNMDPVDTATYYCARI</sequence>
<name>HV70D_HUMAN</name>
<evidence type="ECO:0000250" key="1">
    <source>
        <dbReference type="UniProtKB" id="P01814"/>
    </source>
</evidence>
<evidence type="ECO:0000250" key="2">
    <source>
        <dbReference type="UniProtKB" id="P23083"/>
    </source>
</evidence>
<evidence type="ECO:0000255" key="3"/>
<evidence type="ECO:0000255" key="4">
    <source>
        <dbReference type="PROSITE-ProRule" id="PRU00114"/>
    </source>
</evidence>
<evidence type="ECO:0000303" key="5">
    <source>
    </source>
</evidence>
<evidence type="ECO:0000303" key="6">
    <source>
    </source>
</evidence>
<evidence type="ECO:0000303" key="7">
    <source>
    </source>
</evidence>
<evidence type="ECO:0000303" key="8">
    <source>
    </source>
</evidence>
<evidence type="ECO:0000303" key="9">
    <source>
    </source>
</evidence>
<evidence type="ECO:0000303" key="10">
    <source ref="3"/>
</evidence>
<evidence type="ECO:0000305" key="11"/>
<dbReference type="EMBL" id="AC245369">
    <property type="status" value="NOT_ANNOTATED_CDS"/>
    <property type="molecule type" value="Genomic_DNA"/>
</dbReference>
<dbReference type="SMR" id="A0A0C4DH43"/>
<dbReference type="FunCoup" id="A0A0C4DH43">
    <property type="interactions" value="302"/>
</dbReference>
<dbReference type="BioMuta" id="HGNC:49602"/>
<dbReference type="MassIVE" id="A0A0C4DH43"/>
<dbReference type="Ensembl" id="ENST00000390634.3">
    <property type="protein sequence ID" value="ENSP00000375043.2"/>
    <property type="gene ID" value="ENSG00000211974.3"/>
</dbReference>
<dbReference type="Ensembl" id="ENST00000632005.1">
    <property type="protein sequence ID" value="ENSP00000488441.1"/>
    <property type="gene ID" value="ENSG00000282482.1"/>
</dbReference>
<dbReference type="AGR" id="HGNC:49602"/>
<dbReference type="GeneCards" id="IGHV2-70D"/>
<dbReference type="HGNC" id="HGNC:49602">
    <property type="gene designation" value="IGHV2-70D"/>
</dbReference>
<dbReference type="HPA" id="ENSG00000211974">
    <property type="expression patterns" value="Tissue enhanced (intestine, lymphoid tissue, stomach)"/>
</dbReference>
<dbReference type="neXtProt" id="NX_A0A0C4DH43"/>
<dbReference type="OpenTargets" id="ENSG00000211974"/>
<dbReference type="VEuPathDB" id="HostDB:ENSG00000211974"/>
<dbReference type="GeneTree" id="ENSGT01030000234536"/>
<dbReference type="HOGENOM" id="CLU_077975_5_0_1"/>
<dbReference type="InParanoid" id="A0A0C4DH43"/>
<dbReference type="OMA" id="ICKWAIC"/>
<dbReference type="PAN-GO" id="A0A0C4DH43">
    <property type="GO annotations" value="11 GO annotations based on evolutionary models"/>
</dbReference>
<dbReference type="PhylomeDB" id="A0A0C4DH43"/>
<dbReference type="SignaLink" id="A0A0C4DH43"/>
<dbReference type="Pharos" id="A0A0C4DH43">
    <property type="development level" value="Tdark"/>
</dbReference>
<dbReference type="PRO" id="PR:A0A0C4DH43"/>
<dbReference type="Proteomes" id="UP000005640">
    <property type="component" value="Chromosome 14"/>
</dbReference>
<dbReference type="RNAct" id="A0A0C4DH43">
    <property type="molecule type" value="protein"/>
</dbReference>
<dbReference type="Bgee" id="ENSG00000211974">
    <property type="expression patterns" value="Expressed in vermiform appendix and 76 other cell types or tissues"/>
</dbReference>
<dbReference type="GO" id="GO:0005576">
    <property type="term" value="C:extracellular region"/>
    <property type="evidence" value="ECO:0007669"/>
    <property type="project" value="UniProtKB-SubCell"/>
</dbReference>
<dbReference type="GO" id="GO:0019814">
    <property type="term" value="C:immunoglobulin complex"/>
    <property type="evidence" value="ECO:0007669"/>
    <property type="project" value="UniProtKB-KW"/>
</dbReference>
<dbReference type="GO" id="GO:0005886">
    <property type="term" value="C:plasma membrane"/>
    <property type="evidence" value="ECO:0007669"/>
    <property type="project" value="UniProtKB-SubCell"/>
</dbReference>
<dbReference type="GO" id="GO:0003823">
    <property type="term" value="F:antigen binding"/>
    <property type="evidence" value="ECO:0000318"/>
    <property type="project" value="GO_Central"/>
</dbReference>
<dbReference type="GO" id="GO:0016064">
    <property type="term" value="P:immunoglobulin mediated immune response"/>
    <property type="evidence" value="ECO:0000318"/>
    <property type="project" value="GO_Central"/>
</dbReference>
<dbReference type="FunFam" id="2.60.40.10:FF:001533">
    <property type="entry name" value="Immunoglobulin heavy variable 2-26"/>
    <property type="match status" value="1"/>
</dbReference>
<dbReference type="Gene3D" id="2.60.40.10">
    <property type="entry name" value="Immunoglobulins"/>
    <property type="match status" value="1"/>
</dbReference>
<dbReference type="InterPro" id="IPR007110">
    <property type="entry name" value="Ig-like_dom"/>
</dbReference>
<dbReference type="InterPro" id="IPR036179">
    <property type="entry name" value="Ig-like_dom_sf"/>
</dbReference>
<dbReference type="InterPro" id="IPR013783">
    <property type="entry name" value="Ig-like_fold"/>
</dbReference>
<dbReference type="InterPro" id="IPR013106">
    <property type="entry name" value="Ig_V-set"/>
</dbReference>
<dbReference type="InterPro" id="IPR050199">
    <property type="entry name" value="IgHV"/>
</dbReference>
<dbReference type="PANTHER" id="PTHR23266">
    <property type="entry name" value="IMMUNOGLOBULIN HEAVY CHAIN"/>
    <property type="match status" value="1"/>
</dbReference>
<dbReference type="Pfam" id="PF07686">
    <property type="entry name" value="V-set"/>
    <property type="match status" value="1"/>
</dbReference>
<dbReference type="SMART" id="SM00406">
    <property type="entry name" value="IGv"/>
    <property type="match status" value="1"/>
</dbReference>
<dbReference type="SUPFAM" id="SSF48726">
    <property type="entry name" value="Immunoglobulin"/>
    <property type="match status" value="1"/>
</dbReference>
<dbReference type="PROSITE" id="PS50835">
    <property type="entry name" value="IG_LIKE"/>
    <property type="match status" value="1"/>
</dbReference>
<gene>
    <name evidence="5 10" type="primary">IGHV2-70D</name>
</gene>
<reference key="1">
    <citation type="journal article" date="2003" name="Nature">
        <title>The DNA sequence and analysis of human chromosome 14.</title>
        <authorList>
            <person name="Heilig R."/>
            <person name="Eckenberg R."/>
            <person name="Petit J.-L."/>
            <person name="Fonknechten N."/>
            <person name="Da Silva C."/>
            <person name="Cattolico L."/>
            <person name="Levy M."/>
            <person name="Barbe V."/>
            <person name="De Berardinis V."/>
            <person name="Ureta-Vidal A."/>
            <person name="Pelletier E."/>
            <person name="Vico V."/>
            <person name="Anthouard V."/>
            <person name="Rowen L."/>
            <person name="Madan A."/>
            <person name="Qin S."/>
            <person name="Sun H."/>
            <person name="Du H."/>
            <person name="Pepin K."/>
            <person name="Artiguenave F."/>
            <person name="Robert C."/>
            <person name="Cruaud C."/>
            <person name="Bruels T."/>
            <person name="Jaillon O."/>
            <person name="Friedlander L."/>
            <person name="Samson G."/>
            <person name="Brottier P."/>
            <person name="Cure S."/>
            <person name="Segurens B."/>
            <person name="Aniere F."/>
            <person name="Samain S."/>
            <person name="Crespeau H."/>
            <person name="Abbasi N."/>
            <person name="Aiach N."/>
            <person name="Boscus D."/>
            <person name="Dickhoff R."/>
            <person name="Dors M."/>
            <person name="Dubois I."/>
            <person name="Friedman C."/>
            <person name="Gouyvenoux M."/>
            <person name="James R."/>
            <person name="Madan A."/>
            <person name="Mairey-Estrada B."/>
            <person name="Mangenot S."/>
            <person name="Martins N."/>
            <person name="Menard M."/>
            <person name="Oztas S."/>
            <person name="Ratcliffe A."/>
            <person name="Shaffer T."/>
            <person name="Trask B."/>
            <person name="Vacherie B."/>
            <person name="Bellemere C."/>
            <person name="Belser C."/>
            <person name="Besnard-Gonnet M."/>
            <person name="Bartol-Mavel D."/>
            <person name="Boutard M."/>
            <person name="Briez-Silla S."/>
            <person name="Combette S."/>
            <person name="Dufosse-Laurent V."/>
            <person name="Ferron C."/>
            <person name="Lechaplais C."/>
            <person name="Louesse C."/>
            <person name="Muselet D."/>
            <person name="Magdelenat G."/>
            <person name="Pateau E."/>
            <person name="Petit E."/>
            <person name="Sirvain-Trukniewicz P."/>
            <person name="Trybou A."/>
            <person name="Vega-Czarny N."/>
            <person name="Bataille E."/>
            <person name="Bluet E."/>
            <person name="Bordelais I."/>
            <person name="Dubois M."/>
            <person name="Dumont C."/>
            <person name="Guerin T."/>
            <person name="Haffray S."/>
            <person name="Hammadi R."/>
            <person name="Muanga J."/>
            <person name="Pellouin V."/>
            <person name="Robert D."/>
            <person name="Wunderle E."/>
            <person name="Gauguet G."/>
            <person name="Roy A."/>
            <person name="Sainte-Marthe L."/>
            <person name="Verdier J."/>
            <person name="Verdier-Discala C."/>
            <person name="Hillier L.W."/>
            <person name="Fulton L."/>
            <person name="McPherson J."/>
            <person name="Matsuda F."/>
            <person name="Wilson R."/>
            <person name="Scarpelli C."/>
            <person name="Gyapay G."/>
            <person name="Wincker P."/>
            <person name="Saurin W."/>
            <person name="Quetier F."/>
            <person name="Waterston R."/>
            <person name="Hood L."/>
            <person name="Weissenbach J."/>
        </authorList>
    </citation>
    <scope>NUCLEOTIDE SEQUENCE [LARGE SCALE GENOMIC DNA] (IMGT ALLELE IGHV2-70D*04)</scope>
</reference>
<reference key="2">
    <citation type="journal article" date="2001" name="Exp. Clin. Immunogenet.">
        <title>Nomenclature of the human immunoglobulin heavy (IGH) genes.</title>
        <authorList>
            <person name="Lefranc M.P."/>
        </authorList>
    </citation>
    <scope>NOMENCLATURE</scope>
</reference>
<reference key="3">
    <citation type="book" date="2001" name="The Immunoglobulin FactsBook.">
        <title>The Immunoglobulin FactsBook.</title>
        <editorList>
            <person name="Lefranc M.P."/>
            <person name="Lefranc G."/>
        </editorList>
        <authorList>
            <person name="Lefranc M.P."/>
            <person name="Lefranc G."/>
        </authorList>
    </citation>
    <scope>NOMENCLATURE</scope>
</reference>
<reference key="4">
    <citation type="journal article" date="2007" name="Annu. Rev. Genet.">
        <title>Immunoglobulin somatic hypermutation.</title>
        <authorList>
            <person name="Teng G."/>
            <person name="Papavasiliou F.N."/>
        </authorList>
    </citation>
    <scope>REVIEW ON SOMATIC HYPERMUTATION</scope>
</reference>
<reference key="5">
    <citation type="journal article" date="2010" name="J. Allergy Clin. Immunol.">
        <title>Structure and function of immunoglobulins.</title>
        <authorList>
            <person name="Schroeder H.W. Jr."/>
            <person name="Cavacini L."/>
        </authorList>
    </citation>
    <scope>REVIEW ON IMMUNOGLOBULINS</scope>
</reference>
<reference key="6">
    <citation type="journal article" date="2012" name="Nat. Rev. Immunol.">
        <title>Molecular programming of B cell memory.</title>
        <authorList>
            <person name="McHeyzer-Williams M."/>
            <person name="Okitsu S."/>
            <person name="Wang N."/>
            <person name="McHeyzer-Williams L."/>
        </authorList>
    </citation>
    <scope>REVIEW ON FUNCTION</scope>
</reference>
<reference key="7">
    <citation type="journal article" date="2014" name="Front. Immunol.">
        <title>Immunoglobulin and T Cell Receptor Genes: IMGT((R)) and the Birth and Rise of Immunoinformatics.</title>
        <authorList>
            <person name="Lefranc M.P."/>
        </authorList>
    </citation>
    <scope>NOMENCLATURE</scope>
</reference>
<proteinExistence type="evidence at protein level"/>
<comment type="function">
    <text evidence="6 7 8 9">V region of the variable domain of immunoglobulin heavy chains that participates in the antigen recognition (PubMed:24600447). Immunoglobulins, also known as antibodies, are membrane-bound or secreted glycoproteins produced by B lymphocytes. In the recognition phase of humoral immunity, the membrane-bound immunoglobulins serve as receptors which, upon binding of a specific antigen, trigger the clonal expansion and differentiation of B lymphocytes into immunoglobulins-secreting plasma cells. Secreted immunoglobulins mediate the effector phase of humoral immunity, which results in the elimination of bound antigens (PubMed:20176268, PubMed:22158414). The antigen binding site is formed by the variable domain of one heavy chain, together with that of its associated light chain. Thus, each immunoglobulin has two antigen binding sites with remarkable affinity for a particular antigen. The variable domains are assembled by a process called V-(D)-J rearrangement and can then be subjected to somatic hypermutations which, after exposure to antigen and selection, allow affinity maturation for a particular antigen (PubMed:17576170, PubMed:20176268).</text>
</comment>
<comment type="subunit">
    <text evidence="7">Immunoglobulins are composed of two identical heavy chains and two identical light chains; disulfide-linked.</text>
</comment>
<comment type="subcellular location">
    <subcellularLocation>
        <location evidence="7 8">Secreted</location>
    </subcellularLocation>
    <subcellularLocation>
        <location evidence="7 8">Cell membrane</location>
    </subcellularLocation>
</comment>
<comment type="polymorphism">
    <text evidence="11">There are several alleles. The sequence shown is that of IMGT allele IGHV2-70D*04.</text>
</comment>
<comment type="caution">
    <text evidence="11">For examples of full-length immunoglobulin heavy chains (of different isotypes) see AC P0DOX2, AC P0DOX3, AC P0DOX4, AC P0DOX5 and AC P0DOX6.</text>
</comment>
<accession>A0A0C4DH43</accession>
<keyword id="KW-1064">Adaptive immunity</keyword>
<keyword id="KW-1003">Cell membrane</keyword>
<keyword id="KW-1015">Disulfide bond</keyword>
<keyword id="KW-0391">Immunity</keyword>
<keyword id="KW-1280">Immunoglobulin</keyword>
<keyword id="KW-0393">Immunoglobulin domain</keyword>
<keyword id="KW-0472">Membrane</keyword>
<keyword id="KW-1267">Proteomics identification</keyword>
<keyword id="KW-0873">Pyrrolidone carboxylic acid</keyword>
<keyword id="KW-1185">Reference proteome</keyword>
<keyword id="KW-0964">Secreted</keyword>
<keyword id="KW-0732">Signal</keyword>